<keyword id="KW-0808">Transferase</keyword>
<keyword id="KW-0819">tRNA processing</keyword>
<evidence type="ECO:0000255" key="1">
    <source>
        <dbReference type="HAMAP-Rule" id="MF_01590"/>
    </source>
</evidence>
<protein>
    <recommendedName>
        <fullName evidence="1">tRNA U34 carboxymethyltransferase</fullName>
        <ecNumber evidence="1">2.5.1.-</ecNumber>
    </recommendedName>
</protein>
<reference key="1">
    <citation type="submission" date="2007-10" db="EMBL/GenBank/DDBJ databases">
        <title>Genome sequence of Campylobacter concisus 13826 isolated from human feces.</title>
        <authorList>
            <person name="Fouts D.E."/>
            <person name="Mongodin E.F."/>
            <person name="Puiu D."/>
            <person name="Sebastian Y."/>
            <person name="Miller W.G."/>
            <person name="Mandrell R.E."/>
            <person name="On S."/>
            <person name="Nelson K.E."/>
        </authorList>
    </citation>
    <scope>NUCLEOTIDE SEQUENCE [LARGE SCALE GENOMIC DNA]</scope>
    <source>
        <strain>13826</strain>
    </source>
</reference>
<organism>
    <name type="scientific">Campylobacter concisus (strain 13826)</name>
    <dbReference type="NCBI Taxonomy" id="360104"/>
    <lineage>
        <taxon>Bacteria</taxon>
        <taxon>Pseudomonadati</taxon>
        <taxon>Campylobacterota</taxon>
        <taxon>Epsilonproteobacteria</taxon>
        <taxon>Campylobacterales</taxon>
        <taxon>Campylobacteraceae</taxon>
        <taxon>Campylobacter</taxon>
    </lineage>
</organism>
<accession>A7ZEA2</accession>
<feature type="chain" id="PRO_1000201288" description="tRNA U34 carboxymethyltransferase">
    <location>
        <begin position="1"/>
        <end position="289"/>
    </location>
</feature>
<feature type="binding site" evidence="1">
    <location>
        <position position="60"/>
    </location>
    <ligand>
        <name>carboxy-S-adenosyl-L-methionine</name>
        <dbReference type="ChEBI" id="CHEBI:134278"/>
    </ligand>
</feature>
<feature type="binding site" evidence="1">
    <location>
        <position position="74"/>
    </location>
    <ligand>
        <name>carboxy-S-adenosyl-L-methionine</name>
        <dbReference type="ChEBI" id="CHEBI:134278"/>
    </ligand>
</feature>
<feature type="binding site" evidence="1">
    <location>
        <position position="79"/>
    </location>
    <ligand>
        <name>carboxy-S-adenosyl-L-methionine</name>
        <dbReference type="ChEBI" id="CHEBI:134278"/>
    </ligand>
</feature>
<feature type="binding site" evidence="1">
    <location>
        <position position="98"/>
    </location>
    <ligand>
        <name>carboxy-S-adenosyl-L-methionine</name>
        <dbReference type="ChEBI" id="CHEBI:134278"/>
    </ligand>
</feature>
<feature type="binding site" evidence="1">
    <location>
        <begin position="120"/>
        <end position="122"/>
    </location>
    <ligand>
        <name>carboxy-S-adenosyl-L-methionine</name>
        <dbReference type="ChEBI" id="CHEBI:134278"/>
    </ligand>
</feature>
<feature type="binding site" evidence="1">
    <location>
        <begin position="147"/>
        <end position="148"/>
    </location>
    <ligand>
        <name>carboxy-S-adenosyl-L-methionine</name>
        <dbReference type="ChEBI" id="CHEBI:134278"/>
    </ligand>
</feature>
<feature type="binding site" evidence="1">
    <location>
        <position position="167"/>
    </location>
    <ligand>
        <name>carboxy-S-adenosyl-L-methionine</name>
        <dbReference type="ChEBI" id="CHEBI:134278"/>
    </ligand>
</feature>
<feature type="binding site" evidence="1">
    <location>
        <position position="282"/>
    </location>
    <ligand>
        <name>carboxy-S-adenosyl-L-methionine</name>
        <dbReference type="ChEBI" id="CHEBI:134278"/>
    </ligand>
</feature>
<name>CMOB_CAMC1</name>
<dbReference type="EC" id="2.5.1.-" evidence="1"/>
<dbReference type="EMBL" id="CP000792">
    <property type="protein sequence ID" value="EAT98738.1"/>
    <property type="molecule type" value="Genomic_DNA"/>
</dbReference>
<dbReference type="RefSeq" id="WP_012140022.1">
    <property type="nucleotide sequence ID" value="NC_009802.2"/>
</dbReference>
<dbReference type="SMR" id="A7ZEA2"/>
<dbReference type="STRING" id="360104.CCC13826_2062"/>
<dbReference type="KEGG" id="cco:CCC13826_2062"/>
<dbReference type="eggNOG" id="COG0500">
    <property type="taxonomic scope" value="Bacteria"/>
</dbReference>
<dbReference type="HOGENOM" id="CLU_052665_1_0_7"/>
<dbReference type="Proteomes" id="UP000001121">
    <property type="component" value="Chromosome"/>
</dbReference>
<dbReference type="GO" id="GO:0016765">
    <property type="term" value="F:transferase activity, transferring alkyl or aryl (other than methyl) groups"/>
    <property type="evidence" value="ECO:0007669"/>
    <property type="project" value="InterPro"/>
</dbReference>
<dbReference type="GO" id="GO:0002098">
    <property type="term" value="P:tRNA wobble uridine modification"/>
    <property type="evidence" value="ECO:0007669"/>
    <property type="project" value="InterPro"/>
</dbReference>
<dbReference type="CDD" id="cd02440">
    <property type="entry name" value="AdoMet_MTases"/>
    <property type="match status" value="1"/>
</dbReference>
<dbReference type="Gene3D" id="3.40.50.150">
    <property type="entry name" value="Vaccinia Virus protein VP39"/>
    <property type="match status" value="1"/>
</dbReference>
<dbReference type="HAMAP" id="MF_01590">
    <property type="entry name" value="tRNA_carboxymethyltr_CmoB"/>
    <property type="match status" value="1"/>
</dbReference>
<dbReference type="InterPro" id="IPR010017">
    <property type="entry name" value="CmoB"/>
</dbReference>
<dbReference type="InterPro" id="IPR027555">
    <property type="entry name" value="Mo5U34_MeTrfas-like"/>
</dbReference>
<dbReference type="InterPro" id="IPR029063">
    <property type="entry name" value="SAM-dependent_MTases_sf"/>
</dbReference>
<dbReference type="NCBIfam" id="NF011650">
    <property type="entry name" value="PRK15068.1"/>
    <property type="match status" value="1"/>
</dbReference>
<dbReference type="NCBIfam" id="TIGR00452">
    <property type="entry name" value="tRNA 5-methoxyuridine(34)/uridine 5-oxyacetic acid(34) synthase CmoB"/>
    <property type="match status" value="1"/>
</dbReference>
<dbReference type="Pfam" id="PF08003">
    <property type="entry name" value="Methyltransf_9"/>
    <property type="match status" value="1"/>
</dbReference>
<dbReference type="SUPFAM" id="SSF53335">
    <property type="entry name" value="S-adenosyl-L-methionine-dependent methyltransferases"/>
    <property type="match status" value="1"/>
</dbReference>
<gene>
    <name evidence="1" type="primary">cmoB</name>
    <name type="ordered locus">Ccon26_12550</name>
    <name type="ORF">CCC13826_2062</name>
</gene>
<sequence length="289" mass="33431">MDLSKFNEQQKQILNRIENLANFDCEFSLSDSVNVKFKNLDQAKKDEIYNLALSLKPWRKGPFLLDDIYIDSEWQSFIKFNILAPHLNLAGKCVADVGCNNGYYMFKMLSYDPKSITGFDPSVHTYLQFKFLNKFIRSNINYQLLGVESLPEYAAKFDTIFCLGVIYHRSDPIKMLKELKTALNTGGELFLDTMYIDMDGDFALSPKDRYSKIPNIYFVPTLSALQNWCERAKFKDFTLLETKATDLNEQRKTQWIDGESLSNFLDPADNTKTIEGYPAPKRAYVRVKI</sequence>
<comment type="function">
    <text evidence="1">Catalyzes carboxymethyl transfer from carboxy-S-adenosyl-L-methionine (Cx-SAM) to 5-hydroxyuridine (ho5U) to form 5-carboxymethoxyuridine (cmo5U) at position 34 in tRNAs.</text>
</comment>
<comment type="catalytic activity">
    <reaction evidence="1">
        <text>carboxy-S-adenosyl-L-methionine + 5-hydroxyuridine(34) in tRNA = 5-carboxymethoxyuridine(34) in tRNA + S-adenosyl-L-homocysteine + H(+)</text>
        <dbReference type="Rhea" id="RHEA:52848"/>
        <dbReference type="Rhea" id="RHEA-COMP:13381"/>
        <dbReference type="Rhea" id="RHEA-COMP:13383"/>
        <dbReference type="ChEBI" id="CHEBI:15378"/>
        <dbReference type="ChEBI" id="CHEBI:57856"/>
        <dbReference type="ChEBI" id="CHEBI:134278"/>
        <dbReference type="ChEBI" id="CHEBI:136877"/>
        <dbReference type="ChEBI" id="CHEBI:136879"/>
    </reaction>
</comment>
<comment type="subunit">
    <text evidence="1">Homotetramer.</text>
</comment>
<comment type="similarity">
    <text evidence="1">Belongs to the class I-like SAM-binding methyltransferase superfamily. CmoB family.</text>
</comment>
<proteinExistence type="inferred from homology"/>